<dbReference type="EC" id="6.3.5.-"/>
<dbReference type="EMBL" id="AE006641">
    <property type="protein sequence ID" value="AAK40575.1"/>
    <property type="status" value="ALT_FRAME"/>
    <property type="molecule type" value="Genomic_DNA"/>
</dbReference>
<dbReference type="PIR" id="H90164">
    <property type="entry name" value="H90164"/>
</dbReference>
<dbReference type="RefSeq" id="WP_009990489.1">
    <property type="nucleotide sequence ID" value="NC_002754.1"/>
</dbReference>
<dbReference type="SMR" id="Q980Q3"/>
<dbReference type="FunCoup" id="Q980Q3">
    <property type="interactions" value="192"/>
</dbReference>
<dbReference type="STRING" id="273057.SSO0232"/>
<dbReference type="PaxDb" id="273057-SSO0232"/>
<dbReference type="EnsemblBacteria" id="AAK40575">
    <property type="protein sequence ID" value="AAK40575"/>
    <property type="gene ID" value="SSO0232"/>
</dbReference>
<dbReference type="GeneID" id="1455385"/>
<dbReference type="KEGG" id="sso:SSO0232"/>
<dbReference type="PATRIC" id="fig|273057.12.peg.230"/>
<dbReference type="eggNOG" id="arCOG01718">
    <property type="taxonomic scope" value="Archaea"/>
</dbReference>
<dbReference type="HOGENOM" id="CLU_019240_0_1_2"/>
<dbReference type="InParanoid" id="Q980Q3"/>
<dbReference type="PhylomeDB" id="Q980Q3"/>
<dbReference type="Proteomes" id="UP000001974">
    <property type="component" value="Chromosome"/>
</dbReference>
<dbReference type="GO" id="GO:0050566">
    <property type="term" value="F:asparaginyl-tRNA synthase (glutamine-hydrolyzing) activity"/>
    <property type="evidence" value="ECO:0007669"/>
    <property type="project" value="RHEA"/>
</dbReference>
<dbReference type="GO" id="GO:0005524">
    <property type="term" value="F:ATP binding"/>
    <property type="evidence" value="ECO:0007669"/>
    <property type="project" value="UniProtKB-KW"/>
</dbReference>
<dbReference type="GO" id="GO:0050567">
    <property type="term" value="F:glutaminyl-tRNA synthase (glutamine-hydrolyzing) activity"/>
    <property type="evidence" value="ECO:0000318"/>
    <property type="project" value="GO_Central"/>
</dbReference>
<dbReference type="GO" id="GO:0070681">
    <property type="term" value="P:glutaminyl-tRNAGln biosynthesis via transamidation"/>
    <property type="evidence" value="ECO:0000318"/>
    <property type="project" value="GO_Central"/>
</dbReference>
<dbReference type="GO" id="GO:0006412">
    <property type="term" value="P:translation"/>
    <property type="evidence" value="ECO:0007669"/>
    <property type="project" value="UniProtKB-UniRule"/>
</dbReference>
<dbReference type="FunFam" id="1.10.10.410:FF:000001">
    <property type="entry name" value="Aspartyl/glutamyl-tRNA(Asn/Gln) amidotransferase subunit B"/>
    <property type="match status" value="1"/>
</dbReference>
<dbReference type="Gene3D" id="1.10.10.410">
    <property type="match status" value="1"/>
</dbReference>
<dbReference type="Gene3D" id="1.10.150.380">
    <property type="entry name" value="GatB domain, N-terminal subdomain"/>
    <property type="match status" value="1"/>
</dbReference>
<dbReference type="HAMAP" id="MF_00121">
    <property type="entry name" value="GatB"/>
    <property type="match status" value="1"/>
</dbReference>
<dbReference type="InterPro" id="IPR017959">
    <property type="entry name" value="Asn/Gln-tRNA_amidoTrfase_suB/E"/>
</dbReference>
<dbReference type="InterPro" id="IPR006075">
    <property type="entry name" value="Asn/Gln-tRNA_Trfase_suB/E_cat"/>
</dbReference>
<dbReference type="InterPro" id="IPR018027">
    <property type="entry name" value="Asn/Gln_amidotransferase"/>
</dbReference>
<dbReference type="InterPro" id="IPR003789">
    <property type="entry name" value="Asn/Gln_tRNA_amidoTrase-B-like"/>
</dbReference>
<dbReference type="InterPro" id="IPR004413">
    <property type="entry name" value="GatB"/>
</dbReference>
<dbReference type="InterPro" id="IPR042114">
    <property type="entry name" value="GatB_C_1"/>
</dbReference>
<dbReference type="InterPro" id="IPR023168">
    <property type="entry name" value="GatB_Yqey_C_2"/>
</dbReference>
<dbReference type="InterPro" id="IPR017958">
    <property type="entry name" value="Gln-tRNA_amidoTrfase_suB_CS"/>
</dbReference>
<dbReference type="InterPro" id="IPR014746">
    <property type="entry name" value="Gln_synth/guanido_kin_cat_dom"/>
</dbReference>
<dbReference type="NCBIfam" id="TIGR00133">
    <property type="entry name" value="gatB"/>
    <property type="match status" value="1"/>
</dbReference>
<dbReference type="NCBIfam" id="NF004012">
    <property type="entry name" value="PRK05477.1-2"/>
    <property type="match status" value="1"/>
</dbReference>
<dbReference type="NCBIfam" id="NF004014">
    <property type="entry name" value="PRK05477.1-4"/>
    <property type="match status" value="1"/>
</dbReference>
<dbReference type="PANTHER" id="PTHR11659">
    <property type="entry name" value="GLUTAMYL-TRNA GLN AMIDOTRANSFERASE SUBUNIT B MITOCHONDRIAL AND PROKARYOTIC PET112-RELATED"/>
    <property type="match status" value="1"/>
</dbReference>
<dbReference type="PANTHER" id="PTHR11659:SF0">
    <property type="entry name" value="GLUTAMYL-TRNA(GLN) AMIDOTRANSFERASE SUBUNIT B, MITOCHONDRIAL"/>
    <property type="match status" value="1"/>
</dbReference>
<dbReference type="Pfam" id="PF02934">
    <property type="entry name" value="GatB_N"/>
    <property type="match status" value="1"/>
</dbReference>
<dbReference type="Pfam" id="PF02637">
    <property type="entry name" value="GatB_Yqey"/>
    <property type="match status" value="1"/>
</dbReference>
<dbReference type="SMART" id="SM00845">
    <property type="entry name" value="GatB_Yqey"/>
    <property type="match status" value="1"/>
</dbReference>
<dbReference type="SUPFAM" id="SSF89095">
    <property type="entry name" value="GatB/YqeY motif"/>
    <property type="match status" value="1"/>
</dbReference>
<dbReference type="SUPFAM" id="SSF55931">
    <property type="entry name" value="Glutamine synthetase/guanido kinase"/>
    <property type="match status" value="1"/>
</dbReference>
<dbReference type="PROSITE" id="PS01234">
    <property type="entry name" value="GATB"/>
    <property type="match status" value="1"/>
</dbReference>
<protein>
    <recommendedName>
        <fullName>Aspartyl/glutamyl-tRNA(Asn/Gln) amidotransferase subunit B</fullName>
        <shortName>Asp/Glu-ADT subunit B</shortName>
        <ecNumber>6.3.5.-</ecNumber>
    </recommendedName>
</protein>
<sequence>MVKIGLEVHVHITALKTKLFCSCPSDYTGKDPNTVTCPVCLGLPGAIPVLNENAVKYGILTALALNCQIAEKLIFDRKHYFYPDMSKNYQISQYDGPGSMAIAKDGYIKLNDKIIRIRRINIEEDPAKIVYPTGSILTSKYTLLDYNRSGTPLLEIVTEPDLRSAKEARFFLEKLRSILEHLGVCDCGIEGAMKADVNISVKGGERVEVKNVGSPKDVEDAINYEIARQRASILQGIKIERETRHWDNERRVTVPLRTKETEEDYRYFPDPDLPPYSITPELIEKFKREMPELPDQRAERFVKQYNVTPYQAQVLVNEKALADLFEEITNNYKNYAKVANLLINDYMRWLNENNITVTQSKAKANHIIELFEYLDSGLISIKIVKELLPEMILTGKTPGQLIKEKGMTNIKDENYLERIIDEVLNEEKEAVEKAKRDPKVVNYLVGMVMKKTGKRADPQMTVEIIKKKLGLT</sequence>
<evidence type="ECO:0000250" key="1"/>
<evidence type="ECO:0000305" key="2"/>
<accession>Q980Q3</accession>
<organism>
    <name type="scientific">Saccharolobus solfataricus (strain ATCC 35092 / DSM 1617 / JCM 11322 / P2)</name>
    <name type="common">Sulfolobus solfataricus</name>
    <dbReference type="NCBI Taxonomy" id="273057"/>
    <lineage>
        <taxon>Archaea</taxon>
        <taxon>Thermoproteota</taxon>
        <taxon>Thermoprotei</taxon>
        <taxon>Sulfolobales</taxon>
        <taxon>Sulfolobaceae</taxon>
        <taxon>Saccharolobus</taxon>
    </lineage>
</organism>
<gene>
    <name type="primary">gatB</name>
    <name type="ordered locus">SSO0232</name>
</gene>
<feature type="chain" id="PRO_0000148877" description="Aspartyl/glutamyl-tRNA(Asn/Gln) amidotransferase subunit B">
    <location>
        <begin position="1"/>
        <end position="472"/>
    </location>
</feature>
<keyword id="KW-0067">ATP-binding</keyword>
<keyword id="KW-0436">Ligase</keyword>
<keyword id="KW-0547">Nucleotide-binding</keyword>
<keyword id="KW-0648">Protein biosynthesis</keyword>
<keyword id="KW-1185">Reference proteome</keyword>
<comment type="function">
    <text evidence="1">Allows the formation of correctly charged Asn-tRNA(Asn) or Gln-tRNA(Gln) through the transamidation of misacylated Asp-tRNA(Asn) or Glu-tRNA(Gln) in organisms which lack either or both of asparaginyl-tRNA or glutaminyl-tRNA synthetases. The reaction takes place in the presence of glutamine and ATP through an activated phospho-Asp-tRNA(Asn) or phospho-Glu-tRNA(Gln) (By similarity).</text>
</comment>
<comment type="catalytic activity">
    <reaction>
        <text>L-glutamyl-tRNA(Gln) + L-glutamine + ATP + H2O = L-glutaminyl-tRNA(Gln) + L-glutamate + ADP + phosphate + H(+)</text>
        <dbReference type="Rhea" id="RHEA:17521"/>
        <dbReference type="Rhea" id="RHEA-COMP:9681"/>
        <dbReference type="Rhea" id="RHEA-COMP:9684"/>
        <dbReference type="ChEBI" id="CHEBI:15377"/>
        <dbReference type="ChEBI" id="CHEBI:15378"/>
        <dbReference type="ChEBI" id="CHEBI:29985"/>
        <dbReference type="ChEBI" id="CHEBI:30616"/>
        <dbReference type="ChEBI" id="CHEBI:43474"/>
        <dbReference type="ChEBI" id="CHEBI:58359"/>
        <dbReference type="ChEBI" id="CHEBI:78520"/>
        <dbReference type="ChEBI" id="CHEBI:78521"/>
        <dbReference type="ChEBI" id="CHEBI:456216"/>
    </reaction>
</comment>
<comment type="catalytic activity">
    <reaction>
        <text>L-aspartyl-tRNA(Asn) + L-glutamine + ATP + H2O = L-asparaginyl-tRNA(Asn) + L-glutamate + ADP + phosphate + 2 H(+)</text>
        <dbReference type="Rhea" id="RHEA:14513"/>
        <dbReference type="Rhea" id="RHEA-COMP:9674"/>
        <dbReference type="Rhea" id="RHEA-COMP:9677"/>
        <dbReference type="ChEBI" id="CHEBI:15377"/>
        <dbReference type="ChEBI" id="CHEBI:15378"/>
        <dbReference type="ChEBI" id="CHEBI:29985"/>
        <dbReference type="ChEBI" id="CHEBI:30616"/>
        <dbReference type="ChEBI" id="CHEBI:43474"/>
        <dbReference type="ChEBI" id="CHEBI:58359"/>
        <dbReference type="ChEBI" id="CHEBI:78515"/>
        <dbReference type="ChEBI" id="CHEBI:78516"/>
        <dbReference type="ChEBI" id="CHEBI:456216"/>
    </reaction>
</comment>
<comment type="subunit">
    <text evidence="1">Heterotrimer of A, B and C subunits.</text>
</comment>
<comment type="similarity">
    <text evidence="2">Belongs to the GatB/GatE family. GatB subfamily.</text>
</comment>
<comment type="sequence caution" evidence="2">
    <conflict type="frameshift">
        <sequence resource="EMBL-CDS" id="AAK40575"/>
    </conflict>
</comment>
<reference key="1">
    <citation type="journal article" date="2001" name="Proc. Natl. Acad. Sci. U.S.A.">
        <title>The complete genome of the crenarchaeon Sulfolobus solfataricus P2.</title>
        <authorList>
            <person name="She Q."/>
            <person name="Singh R.K."/>
            <person name="Confalonieri F."/>
            <person name="Zivanovic Y."/>
            <person name="Allard G."/>
            <person name="Awayez M.J."/>
            <person name="Chan-Weiher C.C.-Y."/>
            <person name="Clausen I.G."/>
            <person name="Curtis B.A."/>
            <person name="De Moors A."/>
            <person name="Erauso G."/>
            <person name="Fletcher C."/>
            <person name="Gordon P.M.K."/>
            <person name="Heikamp-de Jong I."/>
            <person name="Jeffries A.C."/>
            <person name="Kozera C.J."/>
            <person name="Medina N."/>
            <person name="Peng X."/>
            <person name="Thi-Ngoc H.P."/>
            <person name="Redder P."/>
            <person name="Schenk M.E."/>
            <person name="Theriault C."/>
            <person name="Tolstrup N."/>
            <person name="Charlebois R.L."/>
            <person name="Doolittle W.F."/>
            <person name="Duguet M."/>
            <person name="Gaasterland T."/>
            <person name="Garrett R.A."/>
            <person name="Ragan M.A."/>
            <person name="Sensen C.W."/>
            <person name="Van der Oost J."/>
        </authorList>
    </citation>
    <scope>NUCLEOTIDE SEQUENCE [LARGE SCALE GENOMIC DNA]</scope>
    <source>
        <strain>ATCC 35092 / DSM 1617 / JCM 11322 / P2</strain>
    </source>
</reference>
<name>GATB_SACS2</name>
<proteinExistence type="inferred from homology"/>